<name>F16PA_ACICJ</name>
<dbReference type="EC" id="3.1.3.11" evidence="1"/>
<dbReference type="EMBL" id="CP000697">
    <property type="protein sequence ID" value="ABQ30040.1"/>
    <property type="molecule type" value="Genomic_DNA"/>
</dbReference>
<dbReference type="RefSeq" id="WP_011941805.1">
    <property type="nucleotide sequence ID" value="NC_009484.1"/>
</dbReference>
<dbReference type="SMR" id="A5FWQ8"/>
<dbReference type="STRING" id="349163.Acry_0821"/>
<dbReference type="KEGG" id="acr:Acry_0821"/>
<dbReference type="eggNOG" id="COG0158">
    <property type="taxonomic scope" value="Bacteria"/>
</dbReference>
<dbReference type="HOGENOM" id="CLU_039977_0_0_5"/>
<dbReference type="UniPathway" id="UPA00138"/>
<dbReference type="Proteomes" id="UP000000245">
    <property type="component" value="Chromosome"/>
</dbReference>
<dbReference type="GO" id="GO:0005829">
    <property type="term" value="C:cytosol"/>
    <property type="evidence" value="ECO:0007669"/>
    <property type="project" value="TreeGrafter"/>
</dbReference>
<dbReference type="GO" id="GO:0042132">
    <property type="term" value="F:fructose 1,6-bisphosphate 1-phosphatase activity"/>
    <property type="evidence" value="ECO:0007669"/>
    <property type="project" value="UniProtKB-UniRule"/>
</dbReference>
<dbReference type="GO" id="GO:0000287">
    <property type="term" value="F:magnesium ion binding"/>
    <property type="evidence" value="ECO:0007669"/>
    <property type="project" value="UniProtKB-UniRule"/>
</dbReference>
<dbReference type="GO" id="GO:0030388">
    <property type="term" value="P:fructose 1,6-bisphosphate metabolic process"/>
    <property type="evidence" value="ECO:0007669"/>
    <property type="project" value="TreeGrafter"/>
</dbReference>
<dbReference type="GO" id="GO:0006002">
    <property type="term" value="P:fructose 6-phosphate metabolic process"/>
    <property type="evidence" value="ECO:0007669"/>
    <property type="project" value="TreeGrafter"/>
</dbReference>
<dbReference type="GO" id="GO:0006000">
    <property type="term" value="P:fructose metabolic process"/>
    <property type="evidence" value="ECO:0007669"/>
    <property type="project" value="TreeGrafter"/>
</dbReference>
<dbReference type="GO" id="GO:0006094">
    <property type="term" value="P:gluconeogenesis"/>
    <property type="evidence" value="ECO:0007669"/>
    <property type="project" value="UniProtKB-UniRule"/>
</dbReference>
<dbReference type="GO" id="GO:0005986">
    <property type="term" value="P:sucrose biosynthetic process"/>
    <property type="evidence" value="ECO:0007669"/>
    <property type="project" value="TreeGrafter"/>
</dbReference>
<dbReference type="CDD" id="cd00354">
    <property type="entry name" value="FBPase"/>
    <property type="match status" value="1"/>
</dbReference>
<dbReference type="FunFam" id="3.40.190.80:FF:000011">
    <property type="entry name" value="Fructose-1,6-bisphosphatase class 1"/>
    <property type="match status" value="1"/>
</dbReference>
<dbReference type="Gene3D" id="3.40.190.80">
    <property type="match status" value="1"/>
</dbReference>
<dbReference type="Gene3D" id="3.30.540.10">
    <property type="entry name" value="Fructose-1,6-Bisphosphatase, subunit A, domain 1"/>
    <property type="match status" value="1"/>
</dbReference>
<dbReference type="HAMAP" id="MF_01855">
    <property type="entry name" value="FBPase_class1"/>
    <property type="match status" value="1"/>
</dbReference>
<dbReference type="InterPro" id="IPR044015">
    <property type="entry name" value="FBPase_C_dom"/>
</dbReference>
<dbReference type="InterPro" id="IPR000146">
    <property type="entry name" value="FBPase_class-1"/>
</dbReference>
<dbReference type="InterPro" id="IPR033391">
    <property type="entry name" value="FBPase_N"/>
</dbReference>
<dbReference type="InterPro" id="IPR028343">
    <property type="entry name" value="FBPtase"/>
</dbReference>
<dbReference type="InterPro" id="IPR020548">
    <property type="entry name" value="Fructose_bisphosphatase_AS"/>
</dbReference>
<dbReference type="NCBIfam" id="NF006779">
    <property type="entry name" value="PRK09293.1-3"/>
    <property type="match status" value="1"/>
</dbReference>
<dbReference type="NCBIfam" id="NF006780">
    <property type="entry name" value="PRK09293.1-4"/>
    <property type="match status" value="1"/>
</dbReference>
<dbReference type="PANTHER" id="PTHR11556">
    <property type="entry name" value="FRUCTOSE-1,6-BISPHOSPHATASE-RELATED"/>
    <property type="match status" value="1"/>
</dbReference>
<dbReference type="PANTHER" id="PTHR11556:SF35">
    <property type="entry name" value="SEDOHEPTULOSE-1,7-BISPHOSPHATASE, CHLOROPLASTIC"/>
    <property type="match status" value="1"/>
</dbReference>
<dbReference type="Pfam" id="PF00316">
    <property type="entry name" value="FBPase"/>
    <property type="match status" value="1"/>
</dbReference>
<dbReference type="Pfam" id="PF18913">
    <property type="entry name" value="FBPase_C"/>
    <property type="match status" value="1"/>
</dbReference>
<dbReference type="PIRSF" id="PIRSF500210">
    <property type="entry name" value="FBPtase"/>
    <property type="match status" value="1"/>
</dbReference>
<dbReference type="PIRSF" id="PIRSF000904">
    <property type="entry name" value="FBPtase_SBPase"/>
    <property type="match status" value="1"/>
</dbReference>
<dbReference type="PRINTS" id="PR00115">
    <property type="entry name" value="F16BPHPHTASE"/>
</dbReference>
<dbReference type="SUPFAM" id="SSF56655">
    <property type="entry name" value="Carbohydrate phosphatase"/>
    <property type="match status" value="1"/>
</dbReference>
<dbReference type="PROSITE" id="PS00124">
    <property type="entry name" value="FBPASE"/>
    <property type="match status" value="1"/>
</dbReference>
<gene>
    <name evidence="1" type="primary">fbp</name>
    <name type="ordered locus">Acry_0821</name>
</gene>
<protein>
    <recommendedName>
        <fullName evidence="1">Fructose-1,6-bisphosphatase class 1</fullName>
        <shortName evidence="1">FBPase class 1</shortName>
        <ecNumber evidence="1">3.1.3.11</ecNumber>
    </recommendedName>
    <alternativeName>
        <fullName evidence="1">D-fructose-1,6-bisphosphate 1-phosphohydrolase class 1</fullName>
    </alternativeName>
</protein>
<sequence>MSDALRLDTCLDQIASQLPALTASCRVVEALAGAARQIAHLLARGPLSGDLGAVIGESLDGDGQKALDAITHALVREAVIASGAAAFASEEAAAPEWLDPVGEVAVAVDPLDGSSNIDTLAPVGTIFSILPARHASGADPASPFLQTGRRQLAAGFFIYGPRTALAVTFGNGTRIFTLDPVSGAFLAPAPPATVPAATREYAINGSNLRHWEEPIRDYIVELKQGRNGPRGIDFNTRWLASMVGDAFRILGRGGIYLYPADERQGYEAGRLRLVYEANPIAFLMEQAGASATDGRIPILDLQPAHIHQRCPLVFGSADEVRRVAQAYERAGQPSSPLFRRRSLFRSTSNVAELFA</sequence>
<evidence type="ECO:0000255" key="1">
    <source>
        <dbReference type="HAMAP-Rule" id="MF_01855"/>
    </source>
</evidence>
<proteinExistence type="inferred from homology"/>
<organism>
    <name type="scientific">Acidiphilium cryptum (strain JF-5)</name>
    <dbReference type="NCBI Taxonomy" id="349163"/>
    <lineage>
        <taxon>Bacteria</taxon>
        <taxon>Pseudomonadati</taxon>
        <taxon>Pseudomonadota</taxon>
        <taxon>Alphaproteobacteria</taxon>
        <taxon>Acetobacterales</taxon>
        <taxon>Acidocellaceae</taxon>
        <taxon>Acidiphilium</taxon>
    </lineage>
</organism>
<accession>A5FWQ8</accession>
<keyword id="KW-0119">Carbohydrate metabolism</keyword>
<keyword id="KW-0963">Cytoplasm</keyword>
<keyword id="KW-0378">Hydrolase</keyword>
<keyword id="KW-0460">Magnesium</keyword>
<keyword id="KW-0479">Metal-binding</keyword>
<keyword id="KW-1185">Reference proteome</keyword>
<comment type="catalytic activity">
    <reaction evidence="1">
        <text>beta-D-fructose 1,6-bisphosphate + H2O = beta-D-fructose 6-phosphate + phosphate</text>
        <dbReference type="Rhea" id="RHEA:11064"/>
        <dbReference type="ChEBI" id="CHEBI:15377"/>
        <dbReference type="ChEBI" id="CHEBI:32966"/>
        <dbReference type="ChEBI" id="CHEBI:43474"/>
        <dbReference type="ChEBI" id="CHEBI:57634"/>
        <dbReference type="EC" id="3.1.3.11"/>
    </reaction>
</comment>
<comment type="cofactor">
    <cofactor evidence="1">
        <name>Mg(2+)</name>
        <dbReference type="ChEBI" id="CHEBI:18420"/>
    </cofactor>
    <text evidence="1">Binds 2 magnesium ions per subunit.</text>
</comment>
<comment type="pathway">
    <text evidence="1">Carbohydrate biosynthesis; gluconeogenesis.</text>
</comment>
<comment type="subunit">
    <text evidence="1">Homotetramer.</text>
</comment>
<comment type="subcellular location">
    <subcellularLocation>
        <location evidence="1">Cytoplasm</location>
    </subcellularLocation>
</comment>
<comment type="similarity">
    <text evidence="1">Belongs to the FBPase class 1 family.</text>
</comment>
<feature type="chain" id="PRO_0000364443" description="Fructose-1,6-bisphosphatase class 1">
    <location>
        <begin position="1"/>
        <end position="355"/>
    </location>
</feature>
<feature type="binding site" evidence="1">
    <location>
        <position position="90"/>
    </location>
    <ligand>
        <name>Mg(2+)</name>
        <dbReference type="ChEBI" id="CHEBI:18420"/>
        <label>1</label>
    </ligand>
</feature>
<feature type="binding site" evidence="1">
    <location>
        <position position="109"/>
    </location>
    <ligand>
        <name>Mg(2+)</name>
        <dbReference type="ChEBI" id="CHEBI:18420"/>
        <label>1</label>
    </ligand>
</feature>
<feature type="binding site" evidence="1">
    <location>
        <position position="109"/>
    </location>
    <ligand>
        <name>Mg(2+)</name>
        <dbReference type="ChEBI" id="CHEBI:18420"/>
        <label>2</label>
    </ligand>
</feature>
<feature type="binding site" evidence="1">
    <location>
        <position position="111"/>
    </location>
    <ligand>
        <name>Mg(2+)</name>
        <dbReference type="ChEBI" id="CHEBI:18420"/>
        <label>1</label>
    </ligand>
</feature>
<feature type="binding site" evidence="1">
    <location>
        <begin position="112"/>
        <end position="115"/>
    </location>
    <ligand>
        <name>substrate</name>
    </ligand>
</feature>
<feature type="binding site" evidence="1">
    <location>
        <position position="112"/>
    </location>
    <ligand>
        <name>Mg(2+)</name>
        <dbReference type="ChEBI" id="CHEBI:18420"/>
        <label>2</label>
    </ligand>
</feature>
<feature type="binding site" evidence="1">
    <location>
        <position position="204"/>
    </location>
    <ligand>
        <name>substrate</name>
    </ligand>
</feature>
<feature type="binding site" evidence="1">
    <location>
        <begin position="256"/>
        <end position="258"/>
    </location>
    <ligand>
        <name>substrate</name>
    </ligand>
</feature>
<feature type="binding site" evidence="1">
    <location>
        <position position="276"/>
    </location>
    <ligand>
        <name>Mg(2+)</name>
        <dbReference type="ChEBI" id="CHEBI:18420"/>
        <label>2</label>
    </ligand>
</feature>
<reference key="1">
    <citation type="submission" date="2007-05" db="EMBL/GenBank/DDBJ databases">
        <title>Complete sequence of chromosome of Acidiphilium cryptum JF-5.</title>
        <authorList>
            <consortium name="US DOE Joint Genome Institute"/>
            <person name="Copeland A."/>
            <person name="Lucas S."/>
            <person name="Lapidus A."/>
            <person name="Barry K."/>
            <person name="Detter J.C."/>
            <person name="Glavina del Rio T."/>
            <person name="Hammon N."/>
            <person name="Israni S."/>
            <person name="Dalin E."/>
            <person name="Tice H."/>
            <person name="Pitluck S."/>
            <person name="Sims D."/>
            <person name="Brettin T."/>
            <person name="Bruce D."/>
            <person name="Han C."/>
            <person name="Schmutz J."/>
            <person name="Larimer F."/>
            <person name="Land M."/>
            <person name="Hauser L."/>
            <person name="Kyrpides N."/>
            <person name="Kim E."/>
            <person name="Magnuson T."/>
            <person name="Richardson P."/>
        </authorList>
    </citation>
    <scope>NUCLEOTIDE SEQUENCE [LARGE SCALE GENOMIC DNA]</scope>
    <source>
        <strain>JF-5</strain>
    </source>
</reference>